<gene>
    <name evidence="1" type="primary">era</name>
    <name type="ordered locus">GM21_1062</name>
</gene>
<evidence type="ECO:0000255" key="1">
    <source>
        <dbReference type="HAMAP-Rule" id="MF_00367"/>
    </source>
</evidence>
<evidence type="ECO:0000255" key="2">
    <source>
        <dbReference type="PROSITE-ProRule" id="PRU01050"/>
    </source>
</evidence>
<reference key="1">
    <citation type="submission" date="2009-07" db="EMBL/GenBank/DDBJ databases">
        <title>Complete sequence of Geobacter sp. M21.</title>
        <authorList>
            <consortium name="US DOE Joint Genome Institute"/>
            <person name="Lucas S."/>
            <person name="Copeland A."/>
            <person name="Lapidus A."/>
            <person name="Glavina del Rio T."/>
            <person name="Dalin E."/>
            <person name="Tice H."/>
            <person name="Bruce D."/>
            <person name="Goodwin L."/>
            <person name="Pitluck S."/>
            <person name="Saunders E."/>
            <person name="Brettin T."/>
            <person name="Detter J.C."/>
            <person name="Han C."/>
            <person name="Larimer F."/>
            <person name="Land M."/>
            <person name="Hauser L."/>
            <person name="Kyrpides N."/>
            <person name="Ovchinnikova G."/>
            <person name="Lovley D."/>
        </authorList>
    </citation>
    <scope>NUCLEOTIDE SEQUENCE [LARGE SCALE GENOMIC DNA]</scope>
    <source>
        <strain>M21</strain>
    </source>
</reference>
<accession>C6E2H7</accession>
<proteinExistence type="inferred from homology"/>
<sequence>MSEKKFRSGFVSIVGRPNVGKSTLLNRILGEKLMITSDKPQTTRNRIKGIHNVPGGQIVFIDTPGIHRAKSRLNKFMVDEALSSVQGVDLILFLVDGAVDPEKEAGMIKEVLSGVDAPVILVMNKIDLVPKGELLERMSCYGDTYPFKEIIPVSAGTGDGVEQLVQLVHGLLPEGPCYFPDDILTDVPERFIVAEIVREKIFRLTHDEVPYSTAVVVDSFKERENGVVAISATINVERDSQKGIIIGKRGDMLKRIGTQSRQEIERLLDTKVFLELFVRVSGEWSDNSRMLKEFGYE</sequence>
<feature type="chain" id="PRO_1000205543" description="GTPase Era">
    <location>
        <begin position="1"/>
        <end position="297"/>
    </location>
</feature>
<feature type="domain" description="Era-type G" evidence="2">
    <location>
        <begin position="7"/>
        <end position="174"/>
    </location>
</feature>
<feature type="domain" description="KH type-2" evidence="1">
    <location>
        <begin position="205"/>
        <end position="282"/>
    </location>
</feature>
<feature type="region of interest" description="G1" evidence="2">
    <location>
        <begin position="15"/>
        <end position="22"/>
    </location>
</feature>
<feature type="region of interest" description="G2" evidence="2">
    <location>
        <begin position="41"/>
        <end position="45"/>
    </location>
</feature>
<feature type="region of interest" description="G3" evidence="2">
    <location>
        <begin position="62"/>
        <end position="65"/>
    </location>
</feature>
<feature type="region of interest" description="G4" evidence="2">
    <location>
        <begin position="124"/>
        <end position="127"/>
    </location>
</feature>
<feature type="region of interest" description="G5" evidence="2">
    <location>
        <begin position="153"/>
        <end position="155"/>
    </location>
</feature>
<feature type="binding site" evidence="1">
    <location>
        <begin position="15"/>
        <end position="22"/>
    </location>
    <ligand>
        <name>GTP</name>
        <dbReference type="ChEBI" id="CHEBI:37565"/>
    </ligand>
</feature>
<feature type="binding site" evidence="1">
    <location>
        <begin position="62"/>
        <end position="66"/>
    </location>
    <ligand>
        <name>GTP</name>
        <dbReference type="ChEBI" id="CHEBI:37565"/>
    </ligand>
</feature>
<feature type="binding site" evidence="1">
    <location>
        <begin position="124"/>
        <end position="127"/>
    </location>
    <ligand>
        <name>GTP</name>
        <dbReference type="ChEBI" id="CHEBI:37565"/>
    </ligand>
</feature>
<name>ERA_GEOSM</name>
<comment type="function">
    <text evidence="1">An essential GTPase that binds both GDP and GTP, with rapid nucleotide exchange. Plays a role in 16S rRNA processing and 30S ribosomal subunit biogenesis and possibly also in cell cycle regulation and energy metabolism.</text>
</comment>
<comment type="subunit">
    <text evidence="1">Monomer.</text>
</comment>
<comment type="subcellular location">
    <subcellularLocation>
        <location>Cytoplasm</location>
    </subcellularLocation>
    <subcellularLocation>
        <location evidence="1">Cell inner membrane</location>
        <topology evidence="1">Peripheral membrane protein</topology>
    </subcellularLocation>
</comment>
<comment type="similarity">
    <text evidence="1 2">Belongs to the TRAFAC class TrmE-Era-EngA-EngB-Septin-like GTPase superfamily. Era GTPase family.</text>
</comment>
<keyword id="KW-0997">Cell inner membrane</keyword>
<keyword id="KW-1003">Cell membrane</keyword>
<keyword id="KW-0963">Cytoplasm</keyword>
<keyword id="KW-0342">GTP-binding</keyword>
<keyword id="KW-0472">Membrane</keyword>
<keyword id="KW-0547">Nucleotide-binding</keyword>
<keyword id="KW-0690">Ribosome biogenesis</keyword>
<keyword id="KW-0694">RNA-binding</keyword>
<keyword id="KW-0699">rRNA-binding</keyword>
<dbReference type="EMBL" id="CP001661">
    <property type="protein sequence ID" value="ACT17123.1"/>
    <property type="molecule type" value="Genomic_DNA"/>
</dbReference>
<dbReference type="SMR" id="C6E2H7"/>
<dbReference type="STRING" id="443144.GM21_1062"/>
<dbReference type="KEGG" id="gem:GM21_1062"/>
<dbReference type="eggNOG" id="COG1159">
    <property type="taxonomic scope" value="Bacteria"/>
</dbReference>
<dbReference type="HOGENOM" id="CLU_038009_1_0_7"/>
<dbReference type="OrthoDB" id="9805918at2"/>
<dbReference type="GO" id="GO:0005829">
    <property type="term" value="C:cytosol"/>
    <property type="evidence" value="ECO:0007669"/>
    <property type="project" value="TreeGrafter"/>
</dbReference>
<dbReference type="GO" id="GO:0005886">
    <property type="term" value="C:plasma membrane"/>
    <property type="evidence" value="ECO:0007669"/>
    <property type="project" value="UniProtKB-SubCell"/>
</dbReference>
<dbReference type="GO" id="GO:0005525">
    <property type="term" value="F:GTP binding"/>
    <property type="evidence" value="ECO:0007669"/>
    <property type="project" value="UniProtKB-UniRule"/>
</dbReference>
<dbReference type="GO" id="GO:0003924">
    <property type="term" value="F:GTPase activity"/>
    <property type="evidence" value="ECO:0007669"/>
    <property type="project" value="UniProtKB-UniRule"/>
</dbReference>
<dbReference type="GO" id="GO:0043024">
    <property type="term" value="F:ribosomal small subunit binding"/>
    <property type="evidence" value="ECO:0007669"/>
    <property type="project" value="TreeGrafter"/>
</dbReference>
<dbReference type="GO" id="GO:0070181">
    <property type="term" value="F:small ribosomal subunit rRNA binding"/>
    <property type="evidence" value="ECO:0007669"/>
    <property type="project" value="UniProtKB-UniRule"/>
</dbReference>
<dbReference type="GO" id="GO:0000028">
    <property type="term" value="P:ribosomal small subunit assembly"/>
    <property type="evidence" value="ECO:0007669"/>
    <property type="project" value="TreeGrafter"/>
</dbReference>
<dbReference type="CDD" id="cd04163">
    <property type="entry name" value="Era"/>
    <property type="match status" value="1"/>
</dbReference>
<dbReference type="CDD" id="cd22534">
    <property type="entry name" value="KH-II_Era"/>
    <property type="match status" value="1"/>
</dbReference>
<dbReference type="FunFam" id="3.30.300.20:FF:000003">
    <property type="entry name" value="GTPase Era"/>
    <property type="match status" value="1"/>
</dbReference>
<dbReference type="FunFam" id="3.40.50.300:FF:000094">
    <property type="entry name" value="GTPase Era"/>
    <property type="match status" value="1"/>
</dbReference>
<dbReference type="Gene3D" id="3.30.300.20">
    <property type="match status" value="1"/>
</dbReference>
<dbReference type="Gene3D" id="3.40.50.300">
    <property type="entry name" value="P-loop containing nucleotide triphosphate hydrolases"/>
    <property type="match status" value="1"/>
</dbReference>
<dbReference type="HAMAP" id="MF_00367">
    <property type="entry name" value="GTPase_Era"/>
    <property type="match status" value="1"/>
</dbReference>
<dbReference type="InterPro" id="IPR030388">
    <property type="entry name" value="G_ERA_dom"/>
</dbReference>
<dbReference type="InterPro" id="IPR006073">
    <property type="entry name" value="GTP-bd"/>
</dbReference>
<dbReference type="InterPro" id="IPR005662">
    <property type="entry name" value="GTPase_Era-like"/>
</dbReference>
<dbReference type="InterPro" id="IPR015946">
    <property type="entry name" value="KH_dom-like_a/b"/>
</dbReference>
<dbReference type="InterPro" id="IPR004044">
    <property type="entry name" value="KH_dom_type_2"/>
</dbReference>
<dbReference type="InterPro" id="IPR009019">
    <property type="entry name" value="KH_sf_prok-type"/>
</dbReference>
<dbReference type="InterPro" id="IPR027417">
    <property type="entry name" value="P-loop_NTPase"/>
</dbReference>
<dbReference type="InterPro" id="IPR005225">
    <property type="entry name" value="Small_GTP-bd"/>
</dbReference>
<dbReference type="NCBIfam" id="TIGR00436">
    <property type="entry name" value="era"/>
    <property type="match status" value="1"/>
</dbReference>
<dbReference type="NCBIfam" id="NF000908">
    <property type="entry name" value="PRK00089.1"/>
    <property type="match status" value="1"/>
</dbReference>
<dbReference type="NCBIfam" id="TIGR00231">
    <property type="entry name" value="small_GTP"/>
    <property type="match status" value="1"/>
</dbReference>
<dbReference type="PANTHER" id="PTHR42698">
    <property type="entry name" value="GTPASE ERA"/>
    <property type="match status" value="1"/>
</dbReference>
<dbReference type="PANTHER" id="PTHR42698:SF1">
    <property type="entry name" value="GTPASE ERA, MITOCHONDRIAL"/>
    <property type="match status" value="1"/>
</dbReference>
<dbReference type="Pfam" id="PF07650">
    <property type="entry name" value="KH_2"/>
    <property type="match status" value="1"/>
</dbReference>
<dbReference type="Pfam" id="PF01926">
    <property type="entry name" value="MMR_HSR1"/>
    <property type="match status" value="1"/>
</dbReference>
<dbReference type="PRINTS" id="PR00326">
    <property type="entry name" value="GTP1OBG"/>
</dbReference>
<dbReference type="SUPFAM" id="SSF52540">
    <property type="entry name" value="P-loop containing nucleoside triphosphate hydrolases"/>
    <property type="match status" value="1"/>
</dbReference>
<dbReference type="SUPFAM" id="SSF54814">
    <property type="entry name" value="Prokaryotic type KH domain (KH-domain type II)"/>
    <property type="match status" value="1"/>
</dbReference>
<dbReference type="PROSITE" id="PS51713">
    <property type="entry name" value="G_ERA"/>
    <property type="match status" value="1"/>
</dbReference>
<dbReference type="PROSITE" id="PS50823">
    <property type="entry name" value="KH_TYPE_2"/>
    <property type="match status" value="1"/>
</dbReference>
<organism>
    <name type="scientific">Geobacter sp. (strain M21)</name>
    <dbReference type="NCBI Taxonomy" id="443144"/>
    <lineage>
        <taxon>Bacteria</taxon>
        <taxon>Pseudomonadati</taxon>
        <taxon>Thermodesulfobacteriota</taxon>
        <taxon>Desulfuromonadia</taxon>
        <taxon>Geobacterales</taxon>
        <taxon>Geobacteraceae</taxon>
        <taxon>Geobacter</taxon>
    </lineage>
</organism>
<protein>
    <recommendedName>
        <fullName evidence="1">GTPase Era</fullName>
    </recommendedName>
</protein>